<protein>
    <recommendedName>
        <fullName evidence="1">Phosphoglucosamine mutase</fullName>
        <ecNumber evidence="1">5.4.2.10</ecNumber>
    </recommendedName>
</protein>
<proteinExistence type="inferred from homology"/>
<gene>
    <name evidence="1" type="primary">glmM</name>
    <name type="ordered locus">PLES_51341</name>
</gene>
<keyword id="KW-0413">Isomerase</keyword>
<keyword id="KW-0460">Magnesium</keyword>
<keyword id="KW-0479">Metal-binding</keyword>
<keyword id="KW-0597">Phosphoprotein</keyword>
<reference key="1">
    <citation type="journal article" date="2009" name="Genome Res.">
        <title>Newly introduced genomic prophage islands are critical determinants of in vivo competitiveness in the Liverpool epidemic strain of Pseudomonas aeruginosa.</title>
        <authorList>
            <person name="Winstanley C."/>
            <person name="Langille M.G.I."/>
            <person name="Fothergill J.L."/>
            <person name="Kukavica-Ibrulj I."/>
            <person name="Paradis-Bleau C."/>
            <person name="Sanschagrin F."/>
            <person name="Thomson N.R."/>
            <person name="Winsor G.L."/>
            <person name="Quail M.A."/>
            <person name="Lennard N."/>
            <person name="Bignell A."/>
            <person name="Clarke L."/>
            <person name="Seeger K."/>
            <person name="Saunders D."/>
            <person name="Harris D."/>
            <person name="Parkhill J."/>
            <person name="Hancock R.E.W."/>
            <person name="Brinkman F.S.L."/>
            <person name="Levesque R.C."/>
        </authorList>
    </citation>
    <scope>NUCLEOTIDE SEQUENCE [LARGE SCALE GENOMIC DNA]</scope>
    <source>
        <strain>LESB58</strain>
    </source>
</reference>
<comment type="function">
    <text evidence="1">Catalyzes the conversion of glucosamine-6-phosphate to glucosamine-1-phosphate.</text>
</comment>
<comment type="catalytic activity">
    <reaction evidence="1">
        <text>alpha-D-glucosamine 1-phosphate = D-glucosamine 6-phosphate</text>
        <dbReference type="Rhea" id="RHEA:23424"/>
        <dbReference type="ChEBI" id="CHEBI:58516"/>
        <dbReference type="ChEBI" id="CHEBI:58725"/>
        <dbReference type="EC" id="5.4.2.10"/>
    </reaction>
</comment>
<comment type="cofactor">
    <cofactor evidence="1">
        <name>Mg(2+)</name>
        <dbReference type="ChEBI" id="CHEBI:18420"/>
    </cofactor>
    <text evidence="1">Binds 1 Mg(2+) ion per subunit.</text>
</comment>
<comment type="PTM">
    <text evidence="1">Activated by phosphorylation.</text>
</comment>
<comment type="similarity">
    <text evidence="1">Belongs to the phosphohexose mutase family.</text>
</comment>
<organism>
    <name type="scientific">Pseudomonas aeruginosa (strain LESB58)</name>
    <dbReference type="NCBI Taxonomy" id="557722"/>
    <lineage>
        <taxon>Bacteria</taxon>
        <taxon>Pseudomonadati</taxon>
        <taxon>Pseudomonadota</taxon>
        <taxon>Gammaproteobacteria</taxon>
        <taxon>Pseudomonadales</taxon>
        <taxon>Pseudomonadaceae</taxon>
        <taxon>Pseudomonas</taxon>
    </lineage>
</organism>
<evidence type="ECO:0000255" key="1">
    <source>
        <dbReference type="HAMAP-Rule" id="MF_01554"/>
    </source>
</evidence>
<name>GLMM_PSEA8</name>
<accession>B7V1G1</accession>
<feature type="chain" id="PRO_1000201126" description="Phosphoglucosamine mutase">
    <location>
        <begin position="1"/>
        <end position="445"/>
    </location>
</feature>
<feature type="active site" description="Phosphoserine intermediate" evidence="1">
    <location>
        <position position="101"/>
    </location>
</feature>
<feature type="binding site" description="via phosphate group" evidence="1">
    <location>
        <position position="101"/>
    </location>
    <ligand>
        <name>Mg(2+)</name>
        <dbReference type="ChEBI" id="CHEBI:18420"/>
    </ligand>
</feature>
<feature type="binding site" evidence="1">
    <location>
        <position position="240"/>
    </location>
    <ligand>
        <name>Mg(2+)</name>
        <dbReference type="ChEBI" id="CHEBI:18420"/>
    </ligand>
</feature>
<feature type="binding site" evidence="1">
    <location>
        <position position="242"/>
    </location>
    <ligand>
        <name>Mg(2+)</name>
        <dbReference type="ChEBI" id="CHEBI:18420"/>
    </ligand>
</feature>
<feature type="binding site" evidence="1">
    <location>
        <position position="244"/>
    </location>
    <ligand>
        <name>Mg(2+)</name>
        <dbReference type="ChEBI" id="CHEBI:18420"/>
    </ligand>
</feature>
<feature type="modified residue" description="Phosphoserine" evidence="1">
    <location>
        <position position="101"/>
    </location>
</feature>
<dbReference type="EC" id="5.4.2.10" evidence="1"/>
<dbReference type="EMBL" id="FM209186">
    <property type="protein sequence ID" value="CAW29888.1"/>
    <property type="molecule type" value="Genomic_DNA"/>
</dbReference>
<dbReference type="RefSeq" id="WP_003116076.1">
    <property type="nucleotide sequence ID" value="NC_011770.1"/>
</dbReference>
<dbReference type="SMR" id="B7V1G1"/>
<dbReference type="KEGG" id="pag:PLES_51341"/>
<dbReference type="HOGENOM" id="CLU_016950_7_0_6"/>
<dbReference type="GO" id="GO:0005829">
    <property type="term" value="C:cytosol"/>
    <property type="evidence" value="ECO:0007669"/>
    <property type="project" value="TreeGrafter"/>
</dbReference>
<dbReference type="GO" id="GO:0000287">
    <property type="term" value="F:magnesium ion binding"/>
    <property type="evidence" value="ECO:0007669"/>
    <property type="project" value="UniProtKB-UniRule"/>
</dbReference>
<dbReference type="GO" id="GO:0008966">
    <property type="term" value="F:phosphoglucosamine mutase activity"/>
    <property type="evidence" value="ECO:0007669"/>
    <property type="project" value="UniProtKB-UniRule"/>
</dbReference>
<dbReference type="GO" id="GO:0004615">
    <property type="term" value="F:phosphomannomutase activity"/>
    <property type="evidence" value="ECO:0007669"/>
    <property type="project" value="TreeGrafter"/>
</dbReference>
<dbReference type="GO" id="GO:0005975">
    <property type="term" value="P:carbohydrate metabolic process"/>
    <property type="evidence" value="ECO:0007669"/>
    <property type="project" value="InterPro"/>
</dbReference>
<dbReference type="GO" id="GO:0009252">
    <property type="term" value="P:peptidoglycan biosynthetic process"/>
    <property type="evidence" value="ECO:0007669"/>
    <property type="project" value="TreeGrafter"/>
</dbReference>
<dbReference type="GO" id="GO:0006048">
    <property type="term" value="P:UDP-N-acetylglucosamine biosynthetic process"/>
    <property type="evidence" value="ECO:0007669"/>
    <property type="project" value="TreeGrafter"/>
</dbReference>
<dbReference type="CDD" id="cd05802">
    <property type="entry name" value="GlmM"/>
    <property type="match status" value="1"/>
</dbReference>
<dbReference type="FunFam" id="3.30.310.50:FF:000001">
    <property type="entry name" value="Phosphoglucosamine mutase"/>
    <property type="match status" value="1"/>
</dbReference>
<dbReference type="FunFam" id="3.40.120.10:FF:000001">
    <property type="entry name" value="Phosphoglucosamine mutase"/>
    <property type="match status" value="1"/>
</dbReference>
<dbReference type="FunFam" id="3.40.120.10:FF:000003">
    <property type="entry name" value="Phosphoglucosamine mutase"/>
    <property type="match status" value="1"/>
</dbReference>
<dbReference type="Gene3D" id="3.40.120.10">
    <property type="entry name" value="Alpha-D-Glucose-1,6-Bisphosphate, subunit A, domain 3"/>
    <property type="match status" value="3"/>
</dbReference>
<dbReference type="Gene3D" id="3.30.310.50">
    <property type="entry name" value="Alpha-D-phosphohexomutase, C-terminal domain"/>
    <property type="match status" value="1"/>
</dbReference>
<dbReference type="HAMAP" id="MF_01554_B">
    <property type="entry name" value="GlmM_B"/>
    <property type="match status" value="1"/>
</dbReference>
<dbReference type="InterPro" id="IPR005844">
    <property type="entry name" value="A-D-PHexomutase_a/b/a-I"/>
</dbReference>
<dbReference type="InterPro" id="IPR016055">
    <property type="entry name" value="A-D-PHexomutase_a/b/a-I/II/III"/>
</dbReference>
<dbReference type="InterPro" id="IPR005845">
    <property type="entry name" value="A-D-PHexomutase_a/b/a-II"/>
</dbReference>
<dbReference type="InterPro" id="IPR005846">
    <property type="entry name" value="A-D-PHexomutase_a/b/a-III"/>
</dbReference>
<dbReference type="InterPro" id="IPR005843">
    <property type="entry name" value="A-D-PHexomutase_C"/>
</dbReference>
<dbReference type="InterPro" id="IPR036900">
    <property type="entry name" value="A-D-PHexomutase_C_sf"/>
</dbReference>
<dbReference type="InterPro" id="IPR016066">
    <property type="entry name" value="A-D-PHexomutase_CS"/>
</dbReference>
<dbReference type="InterPro" id="IPR005841">
    <property type="entry name" value="Alpha-D-phosphohexomutase_SF"/>
</dbReference>
<dbReference type="InterPro" id="IPR006352">
    <property type="entry name" value="GlmM_bact"/>
</dbReference>
<dbReference type="InterPro" id="IPR050060">
    <property type="entry name" value="Phosphoglucosamine_mutase"/>
</dbReference>
<dbReference type="NCBIfam" id="TIGR01455">
    <property type="entry name" value="glmM"/>
    <property type="match status" value="1"/>
</dbReference>
<dbReference type="NCBIfam" id="NF008139">
    <property type="entry name" value="PRK10887.1"/>
    <property type="match status" value="1"/>
</dbReference>
<dbReference type="PANTHER" id="PTHR42946:SF1">
    <property type="entry name" value="PHOSPHOGLUCOMUTASE (ALPHA-D-GLUCOSE-1,6-BISPHOSPHATE-DEPENDENT)"/>
    <property type="match status" value="1"/>
</dbReference>
<dbReference type="PANTHER" id="PTHR42946">
    <property type="entry name" value="PHOSPHOHEXOSE MUTASE"/>
    <property type="match status" value="1"/>
</dbReference>
<dbReference type="Pfam" id="PF02878">
    <property type="entry name" value="PGM_PMM_I"/>
    <property type="match status" value="1"/>
</dbReference>
<dbReference type="Pfam" id="PF02879">
    <property type="entry name" value="PGM_PMM_II"/>
    <property type="match status" value="1"/>
</dbReference>
<dbReference type="Pfam" id="PF02880">
    <property type="entry name" value="PGM_PMM_III"/>
    <property type="match status" value="1"/>
</dbReference>
<dbReference type="Pfam" id="PF00408">
    <property type="entry name" value="PGM_PMM_IV"/>
    <property type="match status" value="1"/>
</dbReference>
<dbReference type="PRINTS" id="PR00509">
    <property type="entry name" value="PGMPMM"/>
</dbReference>
<dbReference type="SUPFAM" id="SSF55957">
    <property type="entry name" value="Phosphoglucomutase, C-terminal domain"/>
    <property type="match status" value="1"/>
</dbReference>
<dbReference type="SUPFAM" id="SSF53738">
    <property type="entry name" value="Phosphoglucomutase, first 3 domains"/>
    <property type="match status" value="3"/>
</dbReference>
<dbReference type="PROSITE" id="PS00710">
    <property type="entry name" value="PGM_PMM"/>
    <property type="match status" value="1"/>
</dbReference>
<sequence length="445" mass="47770">MSRKYFGTDGIRGRVGEFPITPDFVLKLGWAVGMAFRRQGNCRVLIGKDTRSSGYMFESAFEAGLSASGADTLLLGPMPTPGIAYLTRTFHAEAGVVISASHNPHDDNGIKFFSGQGTKLPDDVELMIEELLDAPMTVVESARLGKVSRINDAAGRYIEFCKSSVPTSTDFNGLKVVLDCANGATYKIAPSVFRELGAEVTVLAASPNGLNINDKCGSTHLDGLQAAVVEHHADLGIAFDGDGDRVMMVDHTGAVVDGDELLFLIARDLQESGRLQGGVVGTLMSNLGLELALQELHIPFVRAKVGDRYVMAELLARNWMLGGENSGHIVCCQNTTTGDAIIAALQVLMALKHRGQTLAEARQGIRKCPQVLINVRFKGESDPLEHPSVKEASVRVTEQMGGRGRVLLRKSGTEPLVRVMVEGDEEASVRAHAEQLAKIVSEVCA</sequence>